<name>LIS1_HUMAN</name>
<comment type="function">
    <text evidence="2 3 19 21">Regulatory subunit (beta subunit) of the cytosolic type I platelet-activating factor (PAF) acetylhydrolase (PAF-AH (I)), an enzyme that catalyzes the hydrolyze of the acetyl group at the sn-2 position of PAF and its analogs and participates in PAF inactivation. Regulates the PAF-AH (I) activity in a catalytic dimer composition-dependent manner (By similarity). Required for proper activation of Rho GTPases and actin polymerization at the leading edge of locomoting cerebellar neurons and postmigratory hippocampal neurons in response to calcium influx triggered via NMDA receptors (By similarity). Positively regulates the activity of the minus-end directed microtubule motor protein dynein. May enhance dynein-mediated microtubule sliding by targeting dynein to the microtubule plus end. Required for several dynein- and microtubule-dependent processes such as the maintenance of Golgi integrity, the peripheral transport of microtubule fragments and the coupling of the nucleus and centrosome. Required during brain development for the proliferation of neuronal precursors and the migration of newly formed neurons from the ventricular/subventricular zone toward the cortical plate. Neuronal migration involves a process called nucleokinesis, whereby migrating cells extend an anterior process into which the nucleus subsequently translocates. During nucleokinesis dynein at the nuclear surface may translocate the nucleus towards the centrosome by exerting force on centrosomal microtubules. May also play a role in other forms of cell locomotion including the migration of fibroblasts during wound healing. Required for dynein recruitment to microtubule plus ends and BICD2-bound cargos (PubMed:22956769). May modulate the Reelin pathway through interaction of the PAF-AH (I) catalytic dimer with VLDLR (By similarity).</text>
</comment>
<comment type="subunit">
    <text evidence="2 3 9 10 12 13 16 17 20 22">Component of the cytosolic PAF-AH (I) heterotetrameric enzyme, which is composed of PAFAH1B1 (beta), PAFAH1B2 (alpha2) and PAFAH1B3 (alpha1) subunits. The catalytic activity of the enzyme resides in the alpha1 (PAFAH1B3) and alpha2 (PAFAH1B2) subunits, whereas the beta subunit (PAFAH1B1) has regulatory activity. Trimer formation is not essential for the catalytic activity. Interacts with the catalytic dimer of PAF-AH (I) heterotetrameric enzyme: interacts with PAFAH1B2 homodimer (alpha2/alpha2 homodimer), PAFAH1B3 homodimer (alpha1/alpha1 homodimer) and PAFAH1B2-PAFAH1B3 heterodimer (alpha2/alpha1 heterodimer) (By similarity). Interacts with IQGAP1, KATNB1 and NUDC. Interacts with DAB1 when DAB1 is phosphorylated in response to RELN/reelin signaling (By similarity). Can self-associate. Interacts with DCX, dynein, dynactin, NDE1, NDEL1 and RSN. Interacts with DISC1, and this interaction is enhanced by NDEL1. Interacts with INTS13. Interacts with DCDC1 (PubMed:22159412).</text>
</comment>
<comment type="interaction">
    <interactant intactId="EBI-720620">
        <id>P43034</id>
    </interactant>
    <interactant intactId="EBI-529989">
        <id>Q9NRI5</id>
        <label>DISC1</label>
    </interactant>
    <organismsDiffer>false</organismsDiffer>
    <experiments>2</experiments>
</comment>
<comment type="interaction">
    <interactant intactId="EBI-720620">
        <id>P43034</id>
    </interactant>
    <interactant intactId="EBI-296047">
        <id>P07900</id>
        <label>HSP90AA1</label>
    </interactant>
    <organismsDiffer>false</organismsDiffer>
    <experiments>5</experiments>
</comment>
<comment type="interaction">
    <interactant intactId="EBI-720620">
        <id>P43034</id>
    </interactant>
    <interactant intactId="EBI-928842">
        <id>Q9GZM8</id>
        <label>NDEL1</label>
    </interactant>
    <organismsDiffer>false</organismsDiffer>
    <experiments>6</experiments>
</comment>
<comment type="interaction">
    <interactant intactId="EBI-720620">
        <id>P43034</id>
    </interactant>
    <interactant intactId="EBI-1052153">
        <id>Q8WVJ2</id>
        <label>NUDCD2</label>
    </interactant>
    <organismsDiffer>false</organismsDiffer>
    <experiments>8</experiments>
</comment>
<comment type="interaction">
    <interactant intactId="EBI-720620">
        <id>P43034</id>
    </interactant>
    <interactant intactId="EBI-744342">
        <id>Q8IVD9</id>
        <label>NUDCD3</label>
    </interactant>
    <organismsDiffer>false</organismsDiffer>
    <experiments>2</experiments>
</comment>
<comment type="interaction">
    <interactant intactId="EBI-720620">
        <id>P43034</id>
    </interactant>
    <interactant intactId="EBI-713724">
        <id>P68402</id>
        <label>PAFAH1B2</label>
    </interactant>
    <organismsDiffer>false</organismsDiffer>
    <experiments>3</experiments>
</comment>
<comment type="interaction">
    <interactant intactId="EBI-720620">
        <id>P43034</id>
    </interactant>
    <interactant intactId="EBI-711522">
        <id>Q15102</id>
        <label>PAFAH1B3</label>
    </interactant>
    <organismsDiffer>false</organismsDiffer>
    <experiments>3</experiments>
</comment>
<comment type="interaction">
    <interactant intactId="EBI-720620">
        <id>P43034</id>
    </interactant>
    <interactant intactId="EBI-309934">
        <id>Q9CZA6</id>
        <label>Nde1</label>
    </interactant>
    <organismsDiffer>true</organismsDiffer>
    <experiments>6</experiments>
</comment>
<comment type="subcellular location">
    <subcellularLocation>
        <location>Cytoplasm</location>
        <location>Cytoskeleton</location>
    </subcellularLocation>
    <subcellularLocation>
        <location evidence="15">Cytoplasm</location>
        <location evidence="15">Cytoskeleton</location>
        <location evidence="15">Microtubule organizing center</location>
        <location evidence="15">Centrosome</location>
    </subcellularLocation>
    <subcellularLocation>
        <location evidence="7">Cytoplasm</location>
        <location evidence="7">Cytoskeleton</location>
        <location evidence="7">Spindle</location>
    </subcellularLocation>
    <subcellularLocation>
        <location evidence="7">Nucleus membrane</location>
    </subcellularLocation>
    <text evidence="1">Redistributes to axons during neuronal development. Also localizes to the microtubules of the manchette in elongating spermatids and to the meiotic spindle in spermatocytes (By similarity). Localizes to the plus end of microtubules and to the centrosome. May localize to the nuclear membrane.</text>
</comment>
<comment type="alternative products">
    <event type="alternative splicing"/>
    <isoform>
        <id>P43034-1</id>
        <name>1</name>
        <sequence type="displayed"/>
    </isoform>
    <isoform>
        <id>P43034-2</id>
        <name>2</name>
        <sequence type="described" ref="VSP_019376 VSP_019377 VSP_019378 VSP_019379"/>
    </isoform>
</comment>
<comment type="tissue specificity">
    <text>Fairly ubiquitous expression in both the frontal and occipital areas of the brain.</text>
</comment>
<comment type="domain">
    <text evidence="7">Dimerization mediated by the LisH domain may be required to activate dynein.</text>
</comment>
<comment type="disease" evidence="10 11 18 19 23">
    <disease id="DI-00670">
        <name>Lissencephaly 1</name>
        <acronym>LIS1</acronym>
        <description>A classical lissencephaly. It is characterized by agyria or pachygyria and disorganization of the clear neuronal lamination of normal six-layered cortex. The cortex is abnormally thick and poorly organized with 4 primitive layers. Associated with enlarged and dysmorphic ventricles and often hypoplasia of the corpus callosum.</description>
        <dbReference type="MIM" id="607432"/>
    </disease>
    <text>The disease is caused by variants affecting the gene represented in this entry.</text>
</comment>
<comment type="disease" evidence="8 14">
    <disease id="DI-01094">
        <name>Subcortical band heterotopia</name>
        <acronym>SBH</acronym>
        <description>SBH is a mild brain malformation of the lissencephaly spectrum. It is characterized by bilateral and symmetric plates or bands of gray matter found in the central white matter between the cortex and cerebral ventricles, cerebral convolutions usually appearing normal.</description>
        <dbReference type="MIM" id="607432"/>
    </disease>
    <text>The disease is caused by variants affecting the gene represented in this entry.</text>
</comment>
<comment type="disease">
    <disease id="DI-00769">
        <name>Miller-Dieker lissencephaly syndrome</name>
        <acronym>MDLS</acronym>
        <description>A contiguous gene deletion syndrome of chromosome 17p13.3, characterized by classical lissencephaly and distinct facial features. Additional congenital malformations can be part of the condition.</description>
        <dbReference type="MIM" id="247200"/>
    </disease>
    <text>The disease is caused by variants affecting the gene represented in this entry.</text>
</comment>
<comment type="miscellaneous">
    <text evidence="4 5 6 25">Originally the subunits of the type I platelet-activating factor (PAF) acetylhydrolase was named alpha (PAFAH1B1), beta (PAFAH1B2) and gamma (PAFAH1B3) (By similarity) (Ref.4). Now these subunits have been renamed beta (PAFAH1B1), alpha2 (PAFAH1B2) and alpha1 (PAFAH1B3) respectively (By similarity).</text>
</comment>
<comment type="similarity">
    <text evidence="7">Belongs to the WD repeat LIS1/nudF family.</text>
</comment>
<comment type="sequence caution" evidence="26">
    <conflict type="miscellaneous discrepancy">
        <sequence resource="EMBL-CDS" id="AAA02882"/>
    </conflict>
    <text>Chimeric cDNA.</text>
</comment>
<gene>
    <name evidence="7 27" type="primary">PAFAH1B1</name>
    <name evidence="7" type="synonym">LIS1</name>
    <name type="synonym">MDCR</name>
    <name type="synonym">MDS</name>
    <name type="synonym">PAFAHA</name>
</gene>
<evidence type="ECO:0000250" key="1"/>
<evidence type="ECO:0000250" key="2">
    <source>
        <dbReference type="UniProtKB" id="P43033"/>
    </source>
</evidence>
<evidence type="ECO:0000250" key="3">
    <source>
        <dbReference type="UniProtKB" id="P63005"/>
    </source>
</evidence>
<evidence type="ECO:0000250" key="4">
    <source>
        <dbReference type="UniProtKB" id="P68402"/>
    </source>
</evidence>
<evidence type="ECO:0000250" key="5">
    <source>
        <dbReference type="UniProtKB" id="Q15102"/>
    </source>
</evidence>
<evidence type="ECO:0000250" key="6">
    <source>
        <dbReference type="UniProtKB" id="Q29460"/>
    </source>
</evidence>
<evidence type="ECO:0000255" key="7">
    <source>
        <dbReference type="HAMAP-Rule" id="MF_03141"/>
    </source>
</evidence>
<evidence type="ECO:0000269" key="8">
    <source>
    </source>
</evidence>
<evidence type="ECO:0000269" key="9">
    <source>
    </source>
</evidence>
<evidence type="ECO:0000269" key="10">
    <source>
    </source>
</evidence>
<evidence type="ECO:0000269" key="11">
    <source>
    </source>
</evidence>
<evidence type="ECO:0000269" key="12">
    <source>
    </source>
</evidence>
<evidence type="ECO:0000269" key="13">
    <source>
    </source>
</evidence>
<evidence type="ECO:0000269" key="14">
    <source>
    </source>
</evidence>
<evidence type="ECO:0000269" key="15">
    <source>
    </source>
</evidence>
<evidence type="ECO:0000269" key="16">
    <source>
    </source>
</evidence>
<evidence type="ECO:0000269" key="17">
    <source>
    </source>
</evidence>
<evidence type="ECO:0000269" key="18">
    <source>
    </source>
</evidence>
<evidence type="ECO:0000269" key="19">
    <source>
    </source>
</evidence>
<evidence type="ECO:0000269" key="20">
    <source>
    </source>
</evidence>
<evidence type="ECO:0000269" key="21">
    <source>
    </source>
</evidence>
<evidence type="ECO:0000269" key="22">
    <source>
    </source>
</evidence>
<evidence type="ECO:0000269" key="23">
    <source>
    </source>
</evidence>
<evidence type="ECO:0000303" key="24">
    <source>
    </source>
</evidence>
<evidence type="ECO:0000303" key="25">
    <source ref="4"/>
</evidence>
<evidence type="ECO:0000305" key="26"/>
<evidence type="ECO:0000312" key="27">
    <source>
        <dbReference type="HGNC" id="HGNC:8574"/>
    </source>
</evidence>
<evidence type="ECO:0007744" key="28">
    <source>
    </source>
</evidence>
<evidence type="ECO:0007744" key="29">
    <source>
    </source>
</evidence>
<evidence type="ECO:0007829" key="30">
    <source>
        <dbReference type="PDB" id="7MT1"/>
    </source>
</evidence>
<sequence>MVLSQRQRDELNRAIADYLRSNGYEEAYSVFKKEAELDVNEELDKKYAGLLEKKWTSVIRLQKKVMELESKLNEAKEEFTSGGPLGQKRDPKEWIPRPPEKYALSGHRSPVTRVIFHPVFSVMVSASEDATIKVWDYETGDFERTLKGHTDSVQDISFDHSGKLLASCSADMTIKLWDFQGFECIRTMHGHDHNVSSVAIMPNGDHIVSASRDKTIKMWEVQTGYCVKTFTGHREWVRMVRPNQDGTLIASCSNDQTVRVWVVATKECKAELREHEHVVECISWAPESSYSSISEATGSETKKSGKPGPFLLSGSRDKTIKMWDVSTGMCLMTLVGHDNWVRGVLFHSGGKFILSCADDKTLRVWDYKNKRCMKTLNAHEHFVTSLDFHKTAPYVVTGSVDQTVKVWECR</sequence>
<dbReference type="EMBL" id="L13385">
    <property type="protein sequence ID" value="AAA02880.1"/>
    <property type="molecule type" value="mRNA"/>
</dbReference>
<dbReference type="EMBL" id="L13386">
    <property type="protein sequence ID" value="AAA02881.1"/>
    <property type="molecule type" value="mRNA"/>
</dbReference>
<dbReference type="EMBL" id="L13387">
    <property type="protein sequence ID" value="AAA02882.1"/>
    <property type="status" value="ALT_SEQ"/>
    <property type="molecule type" value="mRNA"/>
</dbReference>
<dbReference type="EMBL" id="U72342">
    <property type="protein sequence ID" value="AAC51111.1"/>
    <property type="molecule type" value="Genomic_DNA"/>
</dbReference>
<dbReference type="EMBL" id="U72334">
    <property type="protein sequence ID" value="AAC51111.1"/>
    <property type="status" value="JOINED"/>
    <property type="molecule type" value="Genomic_DNA"/>
</dbReference>
<dbReference type="EMBL" id="U72335">
    <property type="protein sequence ID" value="AAC51111.1"/>
    <property type="status" value="JOINED"/>
    <property type="molecule type" value="Genomic_DNA"/>
</dbReference>
<dbReference type="EMBL" id="U72336">
    <property type="protein sequence ID" value="AAC51111.1"/>
    <property type="status" value="JOINED"/>
    <property type="molecule type" value="Genomic_DNA"/>
</dbReference>
<dbReference type="EMBL" id="U72337">
    <property type="protein sequence ID" value="AAC51111.1"/>
    <property type="status" value="JOINED"/>
    <property type="molecule type" value="Genomic_DNA"/>
</dbReference>
<dbReference type="EMBL" id="U72338">
    <property type="protein sequence ID" value="AAC51111.1"/>
    <property type="status" value="JOINED"/>
    <property type="molecule type" value="Genomic_DNA"/>
</dbReference>
<dbReference type="EMBL" id="U72339">
    <property type="protein sequence ID" value="AAC51111.1"/>
    <property type="status" value="JOINED"/>
    <property type="molecule type" value="Genomic_DNA"/>
</dbReference>
<dbReference type="EMBL" id="U72340">
    <property type="protein sequence ID" value="AAC51111.1"/>
    <property type="status" value="JOINED"/>
    <property type="molecule type" value="Genomic_DNA"/>
</dbReference>
<dbReference type="EMBL" id="U72341">
    <property type="protein sequence ID" value="AAC51111.1"/>
    <property type="status" value="JOINED"/>
    <property type="molecule type" value="Genomic_DNA"/>
</dbReference>
<dbReference type="EMBL" id="AF208837">
    <property type="protein sequence ID" value="AAL34972.1"/>
    <property type="molecule type" value="mRNA"/>
</dbReference>
<dbReference type="EMBL" id="AF208838">
    <property type="protein sequence ID" value="AAL34973.1"/>
    <property type="molecule type" value="mRNA"/>
</dbReference>
<dbReference type="EMBL" id="AF400434">
    <property type="protein sequence ID" value="AAK92483.1"/>
    <property type="molecule type" value="mRNA"/>
</dbReference>
<dbReference type="EMBL" id="AK313078">
    <property type="protein sequence ID" value="BAG35904.1"/>
    <property type="molecule type" value="mRNA"/>
</dbReference>
<dbReference type="EMBL" id="BX538346">
    <property type="protein sequence ID" value="CAD98141.1"/>
    <property type="molecule type" value="mRNA"/>
</dbReference>
<dbReference type="EMBL" id="CH471108">
    <property type="protein sequence ID" value="EAW90536.1"/>
    <property type="molecule type" value="Genomic_DNA"/>
</dbReference>
<dbReference type="EMBL" id="BC064638">
    <property type="protein sequence ID" value="AAH64638.1"/>
    <property type="molecule type" value="mRNA"/>
</dbReference>
<dbReference type="CCDS" id="CCDS32528.1">
    <molecule id="P43034-1"/>
</dbReference>
<dbReference type="PIR" id="S36113">
    <property type="entry name" value="S36113"/>
</dbReference>
<dbReference type="RefSeq" id="NP_000421.1">
    <molecule id="P43034-1"/>
    <property type="nucleotide sequence ID" value="NM_000430.4"/>
</dbReference>
<dbReference type="RefSeq" id="XP_016880188.1">
    <property type="nucleotide sequence ID" value="XM_017024699.1"/>
</dbReference>
<dbReference type="RefSeq" id="XP_016880189.1">
    <property type="nucleotide sequence ID" value="XM_017024700.1"/>
</dbReference>
<dbReference type="RefSeq" id="XP_016880190.1">
    <molecule id="P43034-1"/>
    <property type="nucleotide sequence ID" value="XM_017024701.2"/>
</dbReference>
<dbReference type="RefSeq" id="XP_047292118.1">
    <molecule id="P43034-1"/>
    <property type="nucleotide sequence ID" value="XM_047436162.1"/>
</dbReference>
<dbReference type="RefSeq" id="XP_047292119.1">
    <molecule id="P43034-1"/>
    <property type="nucleotide sequence ID" value="XM_047436163.1"/>
</dbReference>
<dbReference type="RefSeq" id="XP_054172276.1">
    <molecule id="P43034-1"/>
    <property type="nucleotide sequence ID" value="XM_054316301.1"/>
</dbReference>
<dbReference type="RefSeq" id="XP_054172277.1">
    <molecule id="P43034-1"/>
    <property type="nucleotide sequence ID" value="XM_054316302.1"/>
</dbReference>
<dbReference type="RefSeq" id="XP_054172278.1">
    <molecule id="P43034-1"/>
    <property type="nucleotide sequence ID" value="XM_054316303.1"/>
</dbReference>
<dbReference type="PDB" id="7MT1">
    <property type="method" value="X-ray"/>
    <property type="resolution" value="1.30 A"/>
    <property type="chains" value="A=86-410"/>
</dbReference>
<dbReference type="PDB" id="8DYU">
    <property type="method" value="EM"/>
    <property type="resolution" value="4.00 A"/>
    <property type="chains" value="B/C=2-410"/>
</dbReference>
<dbReference type="PDB" id="8DYV">
    <property type="method" value="EM"/>
    <property type="resolution" value="3.97 A"/>
    <property type="chains" value="B=2-410"/>
</dbReference>
<dbReference type="PDB" id="8FDT">
    <property type="method" value="EM"/>
    <property type="resolution" value="3.20 A"/>
    <property type="chains" value="B/C=2-410"/>
</dbReference>
<dbReference type="PDB" id="8FDU">
    <property type="method" value="EM"/>
    <property type="resolution" value="3.30 A"/>
    <property type="chains" value="B/C=2-410"/>
</dbReference>
<dbReference type="PDB" id="8PQW">
    <property type="method" value="EM"/>
    <property type="resolution" value="4.20 A"/>
    <property type="chains" value="B/C/D/E=1-410"/>
</dbReference>
<dbReference type="PDB" id="8PQY">
    <property type="method" value="EM"/>
    <property type="resolution" value="3.80 A"/>
    <property type="chains" value="B/C=1-410"/>
</dbReference>
<dbReference type="PDB" id="8PQZ">
    <property type="method" value="EM"/>
    <property type="resolution" value="5.50 A"/>
    <property type="chains" value="B/C/D/E/K/L=1-410"/>
</dbReference>
<dbReference type="PDB" id="8PTK">
    <property type="method" value="EM"/>
    <property type="resolution" value="10.00 A"/>
    <property type="chains" value="1/2/3/4=1-410"/>
</dbReference>
<dbReference type="PDBsum" id="7MT1"/>
<dbReference type="PDBsum" id="8DYU"/>
<dbReference type="PDBsum" id="8DYV"/>
<dbReference type="PDBsum" id="8FDT"/>
<dbReference type="PDBsum" id="8FDU"/>
<dbReference type="PDBsum" id="8PQW"/>
<dbReference type="PDBsum" id="8PQY"/>
<dbReference type="PDBsum" id="8PQZ"/>
<dbReference type="PDBsum" id="8PTK"/>
<dbReference type="EMDB" id="EMD-17826"/>
<dbReference type="EMDB" id="EMD-17828"/>
<dbReference type="EMDB" id="EMD-17829"/>
<dbReference type="EMDB" id="EMD-17873"/>
<dbReference type="EMDB" id="EMD-27782"/>
<dbReference type="EMDB" id="EMD-27783"/>
<dbReference type="EMDB" id="EMD-29012"/>
<dbReference type="EMDB" id="EMD-29014"/>
<dbReference type="SMR" id="P43034"/>
<dbReference type="BioGRID" id="111085">
    <property type="interactions" value="263"/>
</dbReference>
<dbReference type="ComplexPortal" id="CPX-10326">
    <property type="entry name" value="Platelet-activating factor acetylhydrolase IB complex, alpha1-alpha1 variant"/>
</dbReference>
<dbReference type="ComplexPortal" id="CPX-10328">
    <property type="entry name" value="Platelet-activating factor acetylhydrolase IB complex, alpha2-alpha2 variant"/>
</dbReference>
<dbReference type="ComplexPortal" id="CPX-10329">
    <property type="entry name" value="Platelet-activating factor acetylhydrolase IB complex, alpha1-alpha2 variant"/>
</dbReference>
<dbReference type="DIP" id="DIP-35691N"/>
<dbReference type="FunCoup" id="P43034">
    <property type="interactions" value="2269"/>
</dbReference>
<dbReference type="IntAct" id="P43034">
    <property type="interactions" value="68"/>
</dbReference>
<dbReference type="MINT" id="P43034"/>
<dbReference type="STRING" id="9606.ENSP00000380378"/>
<dbReference type="GlyGen" id="P43034">
    <property type="glycosylation" value="1 site, 1 O-linked glycan (1 site)"/>
</dbReference>
<dbReference type="iPTMnet" id="P43034"/>
<dbReference type="MetOSite" id="P43034"/>
<dbReference type="PhosphoSitePlus" id="P43034"/>
<dbReference type="SwissPalm" id="P43034"/>
<dbReference type="BioMuta" id="PAFAH1B1"/>
<dbReference type="DMDM" id="1170794"/>
<dbReference type="CPTAC" id="CPTAC-103"/>
<dbReference type="CPTAC" id="CPTAC-104"/>
<dbReference type="jPOST" id="P43034"/>
<dbReference type="MassIVE" id="P43034"/>
<dbReference type="PaxDb" id="9606-ENSP00000380378"/>
<dbReference type="PeptideAtlas" id="P43034"/>
<dbReference type="ProteomicsDB" id="55575">
    <molecule id="P43034-1"/>
</dbReference>
<dbReference type="ProteomicsDB" id="55576">
    <molecule id="P43034-2"/>
</dbReference>
<dbReference type="Pumba" id="P43034"/>
<dbReference type="Antibodypedia" id="3850">
    <property type="antibodies" value="304 antibodies from 39 providers"/>
</dbReference>
<dbReference type="DNASU" id="5048"/>
<dbReference type="Ensembl" id="ENST00000397195.10">
    <molecule id="P43034-1"/>
    <property type="protein sequence ID" value="ENSP00000380378.4"/>
    <property type="gene ID" value="ENSG00000007168.15"/>
</dbReference>
<dbReference type="Ensembl" id="ENST00000576586.6">
    <molecule id="P43034-1"/>
    <property type="protein sequence ID" value="ENSP00000461087.2"/>
    <property type="gene ID" value="ENSG00000007168.15"/>
</dbReference>
<dbReference type="Ensembl" id="ENST00000675202.1">
    <molecule id="P43034-1"/>
    <property type="protein sequence ID" value="ENSP00000502843.1"/>
    <property type="gene ID" value="ENSG00000007168.15"/>
</dbReference>
<dbReference type="Ensembl" id="ENST00000675331.1">
    <molecule id="P43034-1"/>
    <property type="protein sequence ID" value="ENSP00000502031.1"/>
    <property type="gene ID" value="ENSG00000007168.15"/>
</dbReference>
<dbReference type="Ensembl" id="ENST00000675390.1">
    <molecule id="P43034-1"/>
    <property type="protein sequence ID" value="ENSP00000501969.1"/>
    <property type="gene ID" value="ENSG00000007168.15"/>
</dbReference>
<dbReference type="Ensembl" id="ENST00000676098.1">
    <molecule id="P43034-1"/>
    <property type="protein sequence ID" value="ENSP00000502735.1"/>
    <property type="gene ID" value="ENSG00000007168.15"/>
</dbReference>
<dbReference type="Ensembl" id="ENST00000676188.1">
    <molecule id="P43034-1"/>
    <property type="protein sequence ID" value="ENSP00000502577.1"/>
    <property type="gene ID" value="ENSG00000007168.15"/>
</dbReference>
<dbReference type="Ensembl" id="ENST00000713986.1">
    <molecule id="P43034-1"/>
    <property type="protein sequence ID" value="ENSP00000519277.1"/>
    <property type="gene ID" value="ENSG00000007168.15"/>
</dbReference>
<dbReference type="Ensembl" id="ENST00000713987.1">
    <molecule id="P43034-1"/>
    <property type="protein sequence ID" value="ENSP00000519278.1"/>
    <property type="gene ID" value="ENSG00000007168.15"/>
</dbReference>
<dbReference type="GeneID" id="5048"/>
<dbReference type="KEGG" id="hsa:5048"/>
<dbReference type="MANE-Select" id="ENST00000397195.10">
    <property type="protein sequence ID" value="ENSP00000380378.4"/>
    <property type="RefSeq nucleotide sequence ID" value="NM_000430.4"/>
    <property type="RefSeq protein sequence ID" value="NP_000421.1"/>
</dbReference>
<dbReference type="UCSC" id="uc002fuw.5">
    <molecule id="P43034-1"/>
    <property type="organism name" value="human"/>
</dbReference>
<dbReference type="AGR" id="HGNC:8574"/>
<dbReference type="CTD" id="5048"/>
<dbReference type="DisGeNET" id="5048"/>
<dbReference type="GeneCards" id="PAFAH1B1"/>
<dbReference type="GeneReviews" id="PAFAH1B1"/>
<dbReference type="HGNC" id="HGNC:8574">
    <property type="gene designation" value="PAFAH1B1"/>
</dbReference>
<dbReference type="HPA" id="ENSG00000007168">
    <property type="expression patterns" value="Low tissue specificity"/>
</dbReference>
<dbReference type="MalaCards" id="PAFAH1B1"/>
<dbReference type="MIM" id="247200">
    <property type="type" value="phenotype"/>
</dbReference>
<dbReference type="MIM" id="601545">
    <property type="type" value="gene"/>
</dbReference>
<dbReference type="MIM" id="607432">
    <property type="type" value="phenotype"/>
</dbReference>
<dbReference type="neXtProt" id="NX_P43034"/>
<dbReference type="OpenTargets" id="ENSG00000007168"/>
<dbReference type="Orphanet" id="217385">
    <property type="disease" value="17p13.3 microduplication syndrome"/>
</dbReference>
<dbReference type="Orphanet" id="95232">
    <property type="disease" value="Lissencephaly due to LIS1 mutation"/>
</dbReference>
<dbReference type="Orphanet" id="531">
    <property type="disease" value="Miller-Dieker syndrome"/>
</dbReference>
<dbReference type="Orphanet" id="99796">
    <property type="disease" value="Subcortical band heterotopia"/>
</dbReference>
<dbReference type="PharmGKB" id="PA32905"/>
<dbReference type="VEuPathDB" id="HostDB:ENSG00000007168"/>
<dbReference type="eggNOG" id="KOG0295">
    <property type="taxonomic scope" value="Eukaryota"/>
</dbReference>
<dbReference type="GeneTree" id="ENSGT00940000155039"/>
<dbReference type="InParanoid" id="P43034"/>
<dbReference type="OMA" id="WHVATKE"/>
<dbReference type="OrthoDB" id="674604at2759"/>
<dbReference type="PAN-GO" id="P43034">
    <property type="GO annotations" value="15 GO annotations based on evolutionary models"/>
</dbReference>
<dbReference type="PhylomeDB" id="P43034"/>
<dbReference type="TreeFam" id="TF105741"/>
<dbReference type="PathwayCommons" id="P43034"/>
<dbReference type="Reactome" id="R-HSA-141444">
    <property type="pathway name" value="Amplification of signal from unattached kinetochores via a MAD2 inhibitory signal"/>
</dbReference>
<dbReference type="Reactome" id="R-HSA-2467813">
    <property type="pathway name" value="Separation of Sister Chromatids"/>
</dbReference>
<dbReference type="Reactome" id="R-HSA-2500257">
    <property type="pathway name" value="Resolution of Sister Chromatid Cohesion"/>
</dbReference>
<dbReference type="Reactome" id="R-HSA-2565942">
    <property type="pathway name" value="Regulation of PLK1 Activity at G2/M Transition"/>
</dbReference>
<dbReference type="Reactome" id="R-HSA-380259">
    <property type="pathway name" value="Loss of Nlp from mitotic centrosomes"/>
</dbReference>
<dbReference type="Reactome" id="R-HSA-380270">
    <property type="pathway name" value="Recruitment of mitotic centrosome proteins and complexes"/>
</dbReference>
<dbReference type="Reactome" id="R-HSA-380284">
    <property type="pathway name" value="Loss of proteins required for interphase microtubule organization from the centrosome"/>
</dbReference>
<dbReference type="Reactome" id="R-HSA-380320">
    <property type="pathway name" value="Recruitment of NuMA to mitotic centrosomes"/>
</dbReference>
<dbReference type="Reactome" id="R-HSA-5620912">
    <property type="pathway name" value="Anchoring of the basal body to the plasma membrane"/>
</dbReference>
<dbReference type="Reactome" id="R-HSA-5663220">
    <property type="pathway name" value="RHO GTPases Activate Formins"/>
</dbReference>
<dbReference type="Reactome" id="R-HSA-6811436">
    <property type="pathway name" value="COPI-independent Golgi-to-ER retrograde traffic"/>
</dbReference>
<dbReference type="Reactome" id="R-HSA-68877">
    <property type="pathway name" value="Mitotic Prometaphase"/>
</dbReference>
<dbReference type="Reactome" id="R-HSA-8854518">
    <property type="pathway name" value="AURKA Activation by TPX2"/>
</dbReference>
<dbReference type="Reactome" id="R-HSA-9648025">
    <property type="pathway name" value="EML4 and NUDC in mitotic spindle formation"/>
</dbReference>
<dbReference type="SignaLink" id="P43034"/>
<dbReference type="SIGNOR" id="P43034"/>
<dbReference type="BioGRID-ORCS" id="5048">
    <property type="hits" value="790 hits in 1166 CRISPR screens"/>
</dbReference>
<dbReference type="CD-CODE" id="8C2F96ED">
    <property type="entry name" value="Centrosome"/>
</dbReference>
<dbReference type="ChiTaRS" id="PAFAH1B1">
    <property type="organism name" value="human"/>
</dbReference>
<dbReference type="GeneWiki" id="PAFAH1B1"/>
<dbReference type="GenomeRNAi" id="5048"/>
<dbReference type="Pharos" id="P43034">
    <property type="development level" value="Tbio"/>
</dbReference>
<dbReference type="PRO" id="PR:P43034"/>
<dbReference type="Proteomes" id="UP000005640">
    <property type="component" value="Chromosome 17"/>
</dbReference>
<dbReference type="RNAct" id="P43034">
    <property type="molecule type" value="protein"/>
</dbReference>
<dbReference type="Bgee" id="ENSG00000007168">
    <property type="expression patterns" value="Expressed in sperm and 212 other cell types or tissues"/>
</dbReference>
<dbReference type="ExpressionAtlas" id="P43034">
    <property type="expression patterns" value="baseline and differential"/>
</dbReference>
<dbReference type="GO" id="GO:0008247">
    <property type="term" value="C:1-alkyl-2-acetylglycerophosphocholine esterase complex"/>
    <property type="evidence" value="ECO:0000250"/>
    <property type="project" value="UniProtKB"/>
</dbReference>
<dbReference type="GO" id="GO:0000235">
    <property type="term" value="C:astral microtubule"/>
    <property type="evidence" value="ECO:0000314"/>
    <property type="project" value="UniProtKB"/>
</dbReference>
<dbReference type="GO" id="GO:1904115">
    <property type="term" value="C:axon cytoplasm"/>
    <property type="evidence" value="ECO:0007669"/>
    <property type="project" value="GOC"/>
</dbReference>
<dbReference type="GO" id="GO:0005938">
    <property type="term" value="C:cell cortex"/>
    <property type="evidence" value="ECO:0000314"/>
    <property type="project" value="UniProtKB"/>
</dbReference>
<dbReference type="GO" id="GO:0031252">
    <property type="term" value="C:cell leading edge"/>
    <property type="evidence" value="ECO:0007669"/>
    <property type="project" value="Ensembl"/>
</dbReference>
<dbReference type="GO" id="GO:0090724">
    <property type="term" value="C:central region of growth cone"/>
    <property type="evidence" value="ECO:0007669"/>
    <property type="project" value="Ensembl"/>
</dbReference>
<dbReference type="GO" id="GO:0005813">
    <property type="term" value="C:centrosome"/>
    <property type="evidence" value="ECO:0000314"/>
    <property type="project" value="HPA"/>
</dbReference>
<dbReference type="GO" id="GO:0005881">
    <property type="term" value="C:cytoplasmic microtubule"/>
    <property type="evidence" value="ECO:0000318"/>
    <property type="project" value="GO_Central"/>
</dbReference>
<dbReference type="GO" id="GO:0005829">
    <property type="term" value="C:cytosol"/>
    <property type="evidence" value="ECO:0000250"/>
    <property type="project" value="BHF-UCL"/>
</dbReference>
<dbReference type="GO" id="GO:0070062">
    <property type="term" value="C:extracellular exosome"/>
    <property type="evidence" value="ECO:0007005"/>
    <property type="project" value="UniProtKB"/>
</dbReference>
<dbReference type="GO" id="GO:0098978">
    <property type="term" value="C:glutamatergic synapse"/>
    <property type="evidence" value="ECO:0007669"/>
    <property type="project" value="Ensembl"/>
</dbReference>
<dbReference type="GO" id="GO:0005871">
    <property type="term" value="C:kinesin complex"/>
    <property type="evidence" value="ECO:0007669"/>
    <property type="project" value="Ensembl"/>
</dbReference>
<dbReference type="GO" id="GO:0000776">
    <property type="term" value="C:kinetochore"/>
    <property type="evidence" value="ECO:0000314"/>
    <property type="project" value="UniProtKB"/>
</dbReference>
<dbReference type="GO" id="GO:0005875">
    <property type="term" value="C:microtubule associated complex"/>
    <property type="evidence" value="ECO:0000314"/>
    <property type="project" value="UniProtKB"/>
</dbReference>
<dbReference type="GO" id="GO:0031514">
    <property type="term" value="C:motile cilium"/>
    <property type="evidence" value="ECO:0000250"/>
    <property type="project" value="BHF-UCL"/>
</dbReference>
<dbReference type="GO" id="GO:0043005">
    <property type="term" value="C:neuron projection"/>
    <property type="evidence" value="ECO:0000318"/>
    <property type="project" value="GO_Central"/>
</dbReference>
<dbReference type="GO" id="GO:0043025">
    <property type="term" value="C:neuronal cell body"/>
    <property type="evidence" value="ECO:0000318"/>
    <property type="project" value="GO_Central"/>
</dbReference>
<dbReference type="GO" id="GO:0005635">
    <property type="term" value="C:nuclear envelope"/>
    <property type="evidence" value="ECO:0000314"/>
    <property type="project" value="UniProtKB"/>
</dbReference>
<dbReference type="GO" id="GO:0031965">
    <property type="term" value="C:nuclear membrane"/>
    <property type="evidence" value="ECO:0007669"/>
    <property type="project" value="UniProtKB-SubCell"/>
</dbReference>
<dbReference type="GO" id="GO:0048471">
    <property type="term" value="C:perinuclear region of cytoplasm"/>
    <property type="evidence" value="ECO:0000250"/>
    <property type="project" value="BHF-UCL"/>
</dbReference>
<dbReference type="GO" id="GO:0098685">
    <property type="term" value="C:Schaffer collateral - CA1 synapse"/>
    <property type="evidence" value="ECO:0007669"/>
    <property type="project" value="Ensembl"/>
</dbReference>
<dbReference type="GO" id="GO:0032420">
    <property type="term" value="C:stereocilium"/>
    <property type="evidence" value="ECO:0007669"/>
    <property type="project" value="Ensembl"/>
</dbReference>
<dbReference type="GO" id="GO:0034452">
    <property type="term" value="F:dynactin binding"/>
    <property type="evidence" value="ECO:0000250"/>
    <property type="project" value="BHF-UCL"/>
</dbReference>
<dbReference type="GO" id="GO:0070840">
    <property type="term" value="F:dynein complex binding"/>
    <property type="evidence" value="ECO:0000314"/>
    <property type="project" value="UniProtKB"/>
</dbReference>
<dbReference type="GO" id="GO:0045505">
    <property type="term" value="F:dynein intermediate chain binding"/>
    <property type="evidence" value="ECO:0007669"/>
    <property type="project" value="Ensembl"/>
</dbReference>
<dbReference type="GO" id="GO:0008201">
    <property type="term" value="F:heparin binding"/>
    <property type="evidence" value="ECO:0000250"/>
    <property type="project" value="BHF-UCL"/>
</dbReference>
<dbReference type="GO" id="GO:0042802">
    <property type="term" value="F:identical protein binding"/>
    <property type="evidence" value="ECO:0000250"/>
    <property type="project" value="BHF-UCL"/>
</dbReference>
<dbReference type="GO" id="GO:0008017">
    <property type="term" value="F:microtubule binding"/>
    <property type="evidence" value="ECO:0000250"/>
    <property type="project" value="BHF-UCL"/>
</dbReference>
<dbReference type="GO" id="GO:0051010">
    <property type="term" value="F:microtubule plus-end binding"/>
    <property type="evidence" value="ECO:0000318"/>
    <property type="project" value="GO_Central"/>
</dbReference>
<dbReference type="GO" id="GO:0043274">
    <property type="term" value="F:phospholipase binding"/>
    <property type="evidence" value="ECO:0000250"/>
    <property type="project" value="BHF-UCL"/>
</dbReference>
<dbReference type="GO" id="GO:0051219">
    <property type="term" value="F:phosphoprotein binding"/>
    <property type="evidence" value="ECO:0000250"/>
    <property type="project" value="BHF-UCL"/>
</dbReference>
<dbReference type="GO" id="GO:0046982">
    <property type="term" value="F:protein heterodimerization activity"/>
    <property type="evidence" value="ECO:0000250"/>
    <property type="project" value="UniProtKB"/>
</dbReference>
<dbReference type="GO" id="GO:0001675">
    <property type="term" value="P:acrosome assembly"/>
    <property type="evidence" value="ECO:0000250"/>
    <property type="project" value="BHF-UCL"/>
</dbReference>
<dbReference type="GO" id="GO:0030036">
    <property type="term" value="P:actin cytoskeleton organization"/>
    <property type="evidence" value="ECO:0000250"/>
    <property type="project" value="BHF-UCL"/>
</dbReference>
<dbReference type="GO" id="GO:0008344">
    <property type="term" value="P:adult locomotory behavior"/>
    <property type="evidence" value="ECO:0000315"/>
    <property type="project" value="BHF-UCL"/>
</dbReference>
<dbReference type="GO" id="GO:0001667">
    <property type="term" value="P:ameboidal-type cell migration"/>
    <property type="evidence" value="ECO:0007669"/>
    <property type="project" value="Ensembl"/>
</dbReference>
<dbReference type="GO" id="GO:0060117">
    <property type="term" value="P:auditory receptor cell development"/>
    <property type="evidence" value="ECO:0007669"/>
    <property type="project" value="Ensembl"/>
</dbReference>
<dbReference type="GO" id="GO:0048854">
    <property type="term" value="P:brain morphogenesis"/>
    <property type="evidence" value="ECO:0000315"/>
    <property type="project" value="BHF-UCL"/>
</dbReference>
<dbReference type="GO" id="GO:0021987">
    <property type="term" value="P:cerebral cortex development"/>
    <property type="evidence" value="ECO:0000315"/>
    <property type="project" value="BHF-UCL"/>
</dbReference>
<dbReference type="GO" id="GO:0021895">
    <property type="term" value="P:cerebral cortex neuron differentiation"/>
    <property type="evidence" value="ECO:0007669"/>
    <property type="project" value="Ensembl"/>
</dbReference>
<dbReference type="GO" id="GO:0007268">
    <property type="term" value="P:chemical synaptic transmission"/>
    <property type="evidence" value="ECO:0000250"/>
    <property type="project" value="BHF-UCL"/>
</dbReference>
<dbReference type="GO" id="GO:0090102">
    <property type="term" value="P:cochlea development"/>
    <property type="evidence" value="ECO:0007669"/>
    <property type="project" value="Ensembl"/>
</dbReference>
<dbReference type="GO" id="GO:0021540">
    <property type="term" value="P:corpus callosum morphogenesis"/>
    <property type="evidence" value="ECO:0000315"/>
    <property type="project" value="BHF-UCL"/>
</dbReference>
<dbReference type="GO" id="GO:0043622">
    <property type="term" value="P:cortical microtubule organization"/>
    <property type="evidence" value="ECO:0007669"/>
    <property type="project" value="Ensembl"/>
</dbReference>
<dbReference type="GO" id="GO:0051660">
    <property type="term" value="P:establishment of centrosome localization"/>
    <property type="evidence" value="ECO:0007669"/>
    <property type="project" value="Ensembl"/>
</dbReference>
<dbReference type="GO" id="GO:0000132">
    <property type="term" value="P:establishment of mitotic spindle orientation"/>
    <property type="evidence" value="ECO:0000315"/>
    <property type="project" value="UniProtKB"/>
</dbReference>
<dbReference type="GO" id="GO:0042249">
    <property type="term" value="P:establishment of planar polarity of embryonic epithelium"/>
    <property type="evidence" value="ECO:0007669"/>
    <property type="project" value="Ensembl"/>
</dbReference>
<dbReference type="GO" id="GO:0007281">
    <property type="term" value="P:germ cell development"/>
    <property type="evidence" value="ECO:0000318"/>
    <property type="project" value="GO_Central"/>
</dbReference>
<dbReference type="GO" id="GO:0021766">
    <property type="term" value="P:hippocampus development"/>
    <property type="evidence" value="ECO:0000250"/>
    <property type="project" value="BHF-UCL"/>
</dbReference>
<dbReference type="GO" id="GO:1904936">
    <property type="term" value="P:interneuron migration"/>
    <property type="evidence" value="ECO:0007669"/>
    <property type="project" value="Ensembl"/>
</dbReference>
<dbReference type="GO" id="GO:0007254">
    <property type="term" value="P:JNK cascade"/>
    <property type="evidence" value="ECO:0007669"/>
    <property type="project" value="Ensembl"/>
</dbReference>
<dbReference type="GO" id="GO:0021819">
    <property type="term" value="P:layer formation in cerebral cortex"/>
    <property type="evidence" value="ECO:0000250"/>
    <property type="project" value="BHF-UCL"/>
</dbReference>
<dbReference type="GO" id="GO:0007611">
    <property type="term" value="P:learning or memory"/>
    <property type="evidence" value="ECO:0000250"/>
    <property type="project" value="BHF-UCL"/>
</dbReference>
<dbReference type="GO" id="GO:0016042">
    <property type="term" value="P:lipid catabolic process"/>
    <property type="evidence" value="ECO:0007669"/>
    <property type="project" value="UniProtKB-KW"/>
</dbReference>
<dbReference type="GO" id="GO:0051661">
    <property type="term" value="P:maintenance of centrosome location"/>
    <property type="evidence" value="ECO:0007669"/>
    <property type="project" value="Ensembl"/>
</dbReference>
<dbReference type="GO" id="GO:0000226">
    <property type="term" value="P:microtubule cytoskeleton organization"/>
    <property type="evidence" value="ECO:0000250"/>
    <property type="project" value="BHF-UCL"/>
</dbReference>
<dbReference type="GO" id="GO:0090176">
    <property type="term" value="P:microtubule cytoskeleton organization involved in establishment of planar polarity"/>
    <property type="evidence" value="ECO:0007669"/>
    <property type="project" value="Ensembl"/>
</dbReference>
<dbReference type="GO" id="GO:0031023">
    <property type="term" value="P:microtubule organizing center organization"/>
    <property type="evidence" value="ECO:0000315"/>
    <property type="project" value="UniProtKB"/>
</dbReference>
<dbReference type="GO" id="GO:0051012">
    <property type="term" value="P:microtubule sliding"/>
    <property type="evidence" value="ECO:0007669"/>
    <property type="project" value="UniProtKB-UniRule"/>
</dbReference>
<dbReference type="GO" id="GO:0007017">
    <property type="term" value="P:microtubule-based process"/>
    <property type="evidence" value="ECO:0000314"/>
    <property type="project" value="UniProtKB"/>
</dbReference>
<dbReference type="GO" id="GO:0050804">
    <property type="term" value="P:modulation of chemical synaptic transmission"/>
    <property type="evidence" value="ECO:0007669"/>
    <property type="project" value="Ensembl"/>
</dbReference>
<dbReference type="GO" id="GO:0097529">
    <property type="term" value="P:myeloid leukocyte migration"/>
    <property type="evidence" value="ECO:0007669"/>
    <property type="project" value="Ensembl"/>
</dbReference>
<dbReference type="GO" id="GO:0046329">
    <property type="term" value="P:negative regulation of JNK cascade"/>
    <property type="evidence" value="ECO:0007669"/>
    <property type="project" value="Ensembl"/>
</dbReference>
<dbReference type="GO" id="GO:0010977">
    <property type="term" value="P:negative regulation of neuron projection development"/>
    <property type="evidence" value="ECO:0007669"/>
    <property type="project" value="Ensembl"/>
</dbReference>
<dbReference type="GO" id="GO:0007405">
    <property type="term" value="P:neuroblast proliferation"/>
    <property type="evidence" value="ECO:0000250"/>
    <property type="project" value="BHF-UCL"/>
</dbReference>
<dbReference type="GO" id="GO:0050885">
    <property type="term" value="P:neuromuscular process controlling balance"/>
    <property type="evidence" value="ECO:0000315"/>
    <property type="project" value="BHF-UCL"/>
</dbReference>
<dbReference type="GO" id="GO:0001764">
    <property type="term" value="P:neuron migration"/>
    <property type="evidence" value="ECO:0000315"/>
    <property type="project" value="UniProtKB"/>
</dbReference>
<dbReference type="GO" id="GO:0051081">
    <property type="term" value="P:nuclear membrane disassembly"/>
    <property type="evidence" value="ECO:0007669"/>
    <property type="project" value="Ensembl"/>
</dbReference>
<dbReference type="GO" id="GO:0007097">
    <property type="term" value="P:nuclear migration"/>
    <property type="evidence" value="ECO:0000318"/>
    <property type="project" value="GO_Central"/>
</dbReference>
<dbReference type="GO" id="GO:0036035">
    <property type="term" value="P:osteoclast development"/>
    <property type="evidence" value="ECO:0007669"/>
    <property type="project" value="Ensembl"/>
</dbReference>
<dbReference type="GO" id="GO:0046469">
    <property type="term" value="P:platelet activating factor metabolic process"/>
    <property type="evidence" value="ECO:0000250"/>
    <property type="project" value="BHF-UCL"/>
</dbReference>
<dbReference type="GO" id="GO:0045773">
    <property type="term" value="P:positive regulation of axon extension"/>
    <property type="evidence" value="ECO:0007669"/>
    <property type="project" value="Ensembl"/>
</dbReference>
<dbReference type="GO" id="GO:0001961">
    <property type="term" value="P:positive regulation of cytokine-mediated signaling pathway"/>
    <property type="evidence" value="ECO:0007669"/>
    <property type="project" value="Ensembl"/>
</dbReference>
<dbReference type="GO" id="GO:0061003">
    <property type="term" value="P:positive regulation of dendritic spine morphogenesis"/>
    <property type="evidence" value="ECO:0007669"/>
    <property type="project" value="Ensembl"/>
</dbReference>
<dbReference type="GO" id="GO:0040019">
    <property type="term" value="P:positive regulation of embryonic development"/>
    <property type="evidence" value="ECO:0007669"/>
    <property type="project" value="Ensembl"/>
</dbReference>
<dbReference type="GO" id="GO:0045931">
    <property type="term" value="P:positive regulation of mitotic cell cycle"/>
    <property type="evidence" value="ECO:0007669"/>
    <property type="project" value="Ensembl"/>
</dbReference>
<dbReference type="GO" id="GO:0009306">
    <property type="term" value="P:protein secretion"/>
    <property type="evidence" value="ECO:0007669"/>
    <property type="project" value="Ensembl"/>
</dbReference>
<dbReference type="GO" id="GO:0140650">
    <property type="term" value="P:radial glia-guided pyramidal neuron migration"/>
    <property type="evidence" value="ECO:0007669"/>
    <property type="project" value="Ensembl"/>
</dbReference>
<dbReference type="GO" id="GO:0038026">
    <property type="term" value="P:reelin-mediated signaling pathway"/>
    <property type="evidence" value="ECO:0000250"/>
    <property type="project" value="UniProtKB"/>
</dbReference>
<dbReference type="GO" id="GO:0070507">
    <property type="term" value="P:regulation of microtubule cytoskeleton organization"/>
    <property type="evidence" value="ECO:0007669"/>
    <property type="project" value="Ensembl"/>
</dbReference>
<dbReference type="GO" id="GO:0008090">
    <property type="term" value="P:retrograde axonal transport"/>
    <property type="evidence" value="ECO:0000250"/>
    <property type="project" value="BHF-UCL"/>
</dbReference>
<dbReference type="GO" id="GO:0017145">
    <property type="term" value="P:stem cell division"/>
    <property type="evidence" value="ECO:0007669"/>
    <property type="project" value="Ensembl"/>
</dbReference>
<dbReference type="GO" id="GO:0019226">
    <property type="term" value="P:transmission of nerve impulse"/>
    <property type="evidence" value="ECO:0000250"/>
    <property type="project" value="BHF-UCL"/>
</dbReference>
<dbReference type="GO" id="GO:0047496">
    <property type="term" value="P:vesicle transport along microtubule"/>
    <property type="evidence" value="ECO:0000250"/>
    <property type="project" value="BHF-UCL"/>
</dbReference>
<dbReference type="CDD" id="cd00200">
    <property type="entry name" value="WD40"/>
    <property type="match status" value="1"/>
</dbReference>
<dbReference type="FunFam" id="2.130.10.10:FF:000038">
    <property type="entry name" value="Lissencephaly-1 homolog B"/>
    <property type="match status" value="1"/>
</dbReference>
<dbReference type="FunFam" id="1.20.960.30:FF:000002">
    <property type="entry name" value="Platelet-activating factor acetylhydrolase ib"/>
    <property type="match status" value="1"/>
</dbReference>
<dbReference type="Gene3D" id="1.20.960.30">
    <property type="match status" value="1"/>
</dbReference>
<dbReference type="Gene3D" id="2.130.10.10">
    <property type="entry name" value="YVTN repeat-like/Quinoprotein amine dehydrogenase"/>
    <property type="match status" value="1"/>
</dbReference>
<dbReference type="HAMAP" id="MF_03141">
    <property type="entry name" value="lis1"/>
    <property type="match status" value="1"/>
</dbReference>
<dbReference type="InterPro" id="IPR017252">
    <property type="entry name" value="Dynein_regulator_LIS1"/>
</dbReference>
<dbReference type="InterPro" id="IPR020472">
    <property type="entry name" value="G-protein_beta_WD-40_rep"/>
</dbReference>
<dbReference type="InterPro" id="IPR037190">
    <property type="entry name" value="LIS1_N"/>
</dbReference>
<dbReference type="InterPro" id="IPR006594">
    <property type="entry name" value="LisH"/>
</dbReference>
<dbReference type="InterPro" id="IPR056795">
    <property type="entry name" value="PAC1-like_LisH-like_dom"/>
</dbReference>
<dbReference type="InterPro" id="IPR015943">
    <property type="entry name" value="WD40/YVTN_repeat-like_dom_sf"/>
</dbReference>
<dbReference type="InterPro" id="IPR019775">
    <property type="entry name" value="WD40_repeat_CS"/>
</dbReference>
<dbReference type="InterPro" id="IPR036322">
    <property type="entry name" value="WD40_repeat_dom_sf"/>
</dbReference>
<dbReference type="InterPro" id="IPR001680">
    <property type="entry name" value="WD40_rpt"/>
</dbReference>
<dbReference type="InterPro" id="IPR050349">
    <property type="entry name" value="WD_LIS1/nudF_dynein_reg"/>
</dbReference>
<dbReference type="PANTHER" id="PTHR44129">
    <property type="entry name" value="WD REPEAT-CONTAINING PROTEIN POP1"/>
    <property type="match status" value="1"/>
</dbReference>
<dbReference type="Pfam" id="PF24951">
    <property type="entry name" value="LisH_PAC1"/>
    <property type="match status" value="1"/>
</dbReference>
<dbReference type="Pfam" id="PF00400">
    <property type="entry name" value="WD40"/>
    <property type="match status" value="7"/>
</dbReference>
<dbReference type="PIRSF" id="PIRSF037647">
    <property type="entry name" value="Dynein_regulator_Lis1"/>
    <property type="match status" value="1"/>
</dbReference>
<dbReference type="PRINTS" id="PR00320">
    <property type="entry name" value="GPROTEINBRPT"/>
</dbReference>
<dbReference type="SMART" id="SM00667">
    <property type="entry name" value="LisH"/>
    <property type="match status" value="1"/>
</dbReference>
<dbReference type="SMART" id="SM00320">
    <property type="entry name" value="WD40"/>
    <property type="match status" value="7"/>
</dbReference>
<dbReference type="SUPFAM" id="SSF109925">
    <property type="entry name" value="Lissencephaly-1 protein (Lis-1, PAF-AH alpha) N-terminal domain"/>
    <property type="match status" value="1"/>
</dbReference>
<dbReference type="SUPFAM" id="SSF50978">
    <property type="entry name" value="WD40 repeat-like"/>
    <property type="match status" value="1"/>
</dbReference>
<dbReference type="PROSITE" id="PS50896">
    <property type="entry name" value="LISH"/>
    <property type="match status" value="1"/>
</dbReference>
<dbReference type="PROSITE" id="PS00678">
    <property type="entry name" value="WD_REPEATS_1"/>
    <property type="match status" value="4"/>
</dbReference>
<dbReference type="PROSITE" id="PS50082">
    <property type="entry name" value="WD_REPEATS_2"/>
    <property type="match status" value="7"/>
</dbReference>
<dbReference type="PROSITE" id="PS50294">
    <property type="entry name" value="WD_REPEATS_REGION"/>
    <property type="match status" value="1"/>
</dbReference>
<accession>P43034</accession>
<accession>B2R7Q7</accession>
<accession>Q8WZ88</accession>
<accession>Q8WZ89</accession>
<organism>
    <name type="scientific">Homo sapiens</name>
    <name type="common">Human</name>
    <dbReference type="NCBI Taxonomy" id="9606"/>
    <lineage>
        <taxon>Eukaryota</taxon>
        <taxon>Metazoa</taxon>
        <taxon>Chordata</taxon>
        <taxon>Craniata</taxon>
        <taxon>Vertebrata</taxon>
        <taxon>Euteleostomi</taxon>
        <taxon>Mammalia</taxon>
        <taxon>Eutheria</taxon>
        <taxon>Euarchontoglires</taxon>
        <taxon>Primates</taxon>
        <taxon>Haplorrhini</taxon>
        <taxon>Catarrhini</taxon>
        <taxon>Hominidae</taxon>
        <taxon>Homo</taxon>
    </lineage>
</organism>
<feature type="chain" id="PRO_0000051061" description="Platelet-activating factor acetylhydrolase IB subunit beta">
    <location>
        <begin position="1"/>
        <end position="410"/>
    </location>
</feature>
<feature type="domain" description="LisH" evidence="7">
    <location>
        <begin position="7"/>
        <end position="39"/>
    </location>
</feature>
<feature type="repeat" description="WD 1">
    <location>
        <begin position="106"/>
        <end position="147"/>
    </location>
</feature>
<feature type="repeat" description="WD 2">
    <location>
        <begin position="148"/>
        <end position="187"/>
    </location>
</feature>
<feature type="repeat" description="WD 3">
    <location>
        <begin position="190"/>
        <end position="229"/>
    </location>
</feature>
<feature type="repeat" description="WD 4">
    <location>
        <begin position="232"/>
        <end position="271"/>
    </location>
</feature>
<feature type="repeat" description="WD 5">
    <location>
        <begin position="274"/>
        <end position="333"/>
    </location>
</feature>
<feature type="repeat" description="WD 6">
    <location>
        <begin position="336"/>
        <end position="377"/>
    </location>
</feature>
<feature type="repeat" description="WD 7">
    <location>
        <begin position="378"/>
        <end position="410"/>
    </location>
</feature>
<feature type="region of interest" description="Interaction with NDEL1" evidence="7">
    <location>
        <begin position="1"/>
        <end position="102"/>
    </location>
</feature>
<feature type="region of interest" description="Interaction with NDE1" evidence="7">
    <location>
        <begin position="1"/>
        <end position="66"/>
    </location>
</feature>
<feature type="region of interest" description="Required for self-association and interaction with PAFAH1B2 and PAFAH1B3" evidence="7">
    <location>
        <begin position="1"/>
        <end position="38"/>
    </location>
</feature>
<feature type="region of interest" description="Interaction with dynein and dynactin">
    <location>
        <begin position="83"/>
        <end position="410"/>
    </location>
</feature>
<feature type="region of interest" description="Interaction with DCX" evidence="9">
    <location>
        <begin position="367"/>
        <end position="409"/>
    </location>
</feature>
<feature type="region of interest" description="Interaction with NDEL1" evidence="7">
    <location>
        <begin position="388"/>
        <end position="410"/>
    </location>
</feature>
<feature type="coiled-coil region" evidence="7">
    <location>
        <begin position="56"/>
        <end position="82"/>
    </location>
</feature>
<feature type="modified residue" description="N6-acetyllysine" evidence="28">
    <location>
        <position position="53"/>
    </location>
</feature>
<feature type="modified residue" description="Phosphoserine" evidence="29">
    <location>
        <position position="109"/>
    </location>
</feature>
<feature type="splice variant" id="VSP_019376" description="In isoform 2." evidence="24">
    <location>
        <begin position="12"/>
        <end position="64"/>
    </location>
</feature>
<feature type="splice variant" id="VSP_019377" description="In isoform 2." evidence="24">
    <location>
        <begin position="134"/>
        <end position="170"/>
    </location>
</feature>
<feature type="splice variant" id="VSP_019378" description="In isoform 2." evidence="24">
    <original>V</original>
    <variation>I</variation>
    <location>
        <position position="237"/>
    </location>
</feature>
<feature type="splice variant" id="VSP_019379" description="In isoform 2." evidence="24">
    <location>
        <begin position="238"/>
        <end position="410"/>
    </location>
</feature>
<feature type="sequence variant" id="VAR_015398" description="In LIS1; dbSNP:rs121434486." evidence="11">
    <original>F</original>
    <variation>S</variation>
    <location>
        <position position="31"/>
    </location>
</feature>
<feature type="sequence variant" id="VAR_007724" description="In LIS1; abrogates interaction with NDE1 and reduces neuronal migration in vitro; dbSNP:rs121434482." evidence="10 19 23">
    <original>H</original>
    <variation>R</variation>
    <location>
        <position position="149"/>
    </location>
</feature>
<feature type="sequence variant" id="VAR_015399" description="In LIS1; dbSNP:rs121434487." evidence="11">
    <original>G</original>
    <variation>S</variation>
    <location>
        <position position="162"/>
    </location>
</feature>
<feature type="sequence variant" id="VAR_010203" description="In SBH; abrogates interaction with NDE1 and reduces neuronal migration in vitro; dbSNP:rs121434484." evidence="8 10 19">
    <original>S</original>
    <variation>P</variation>
    <location>
        <position position="169"/>
    </location>
</feature>
<feature type="sequence variant" id="VAR_037300" description="In SBH; somatic mosaicism in 18% of lymphocytes and 21% of hair root cells; dbSNP:rs121434488." evidence="14">
    <original>R</original>
    <variation>P</variation>
    <location>
        <position position="241"/>
    </location>
</feature>
<feature type="sequence variant" id="VAR_037301" description="In LIS1; dbSNP:rs121434490." evidence="18">
    <original>H</original>
    <variation>P</variation>
    <location>
        <position position="277"/>
    </location>
</feature>
<feature type="sequence variant" id="VAR_015400" description="In LIS1; reduces neuronal migration in vitro; dbSNP:rs121434485." evidence="11 19">
    <original>D</original>
    <variation>H</variation>
    <location>
        <position position="317"/>
    </location>
</feature>
<feature type="sequence conflict" description="In Ref. 3; AAL34972/AAL34973." evidence="26" ref="3">
    <original>S</original>
    <variation>P</variation>
    <location>
        <position position="21"/>
    </location>
</feature>
<feature type="sequence conflict" description="In Ref. 3; AAL34973." evidence="26" ref="3">
    <original>E</original>
    <variation>G</variation>
    <location>
        <position position="93"/>
    </location>
</feature>
<feature type="sequence conflict" description="In Ref. 3; AAL34973." evidence="26" ref="3">
    <original>W</original>
    <variation>R</variation>
    <location>
        <position position="177"/>
    </location>
</feature>
<feature type="strand" evidence="30">
    <location>
        <begin position="101"/>
        <end position="104"/>
    </location>
</feature>
<feature type="strand" evidence="30">
    <location>
        <begin position="111"/>
        <end position="116"/>
    </location>
</feature>
<feature type="strand" evidence="30">
    <location>
        <begin position="118"/>
        <end position="127"/>
    </location>
</feature>
<feature type="strand" evidence="30">
    <location>
        <begin position="130"/>
        <end position="136"/>
    </location>
</feature>
<feature type="turn" evidence="30">
    <location>
        <begin position="137"/>
        <end position="139"/>
    </location>
</feature>
<feature type="strand" evidence="30">
    <location>
        <begin position="142"/>
        <end position="147"/>
    </location>
</feature>
<feature type="strand" evidence="30">
    <location>
        <begin position="153"/>
        <end position="158"/>
    </location>
</feature>
<feature type="strand" evidence="30">
    <location>
        <begin position="162"/>
        <end position="169"/>
    </location>
</feature>
<feature type="strand" evidence="30">
    <location>
        <begin position="174"/>
        <end position="178"/>
    </location>
</feature>
<feature type="turn" evidence="30">
    <location>
        <begin position="179"/>
        <end position="182"/>
    </location>
</feature>
<feature type="strand" evidence="30">
    <location>
        <begin position="183"/>
        <end position="188"/>
    </location>
</feature>
<feature type="strand" evidence="30">
    <location>
        <begin position="195"/>
        <end position="200"/>
    </location>
</feature>
<feature type="strand" evidence="30">
    <location>
        <begin position="204"/>
        <end position="211"/>
    </location>
</feature>
<feature type="strand" evidence="30">
    <location>
        <begin position="216"/>
        <end position="220"/>
    </location>
</feature>
<feature type="turn" evidence="30">
    <location>
        <begin position="221"/>
        <end position="223"/>
    </location>
</feature>
<feature type="strand" evidence="30">
    <location>
        <begin position="226"/>
        <end position="230"/>
    </location>
</feature>
<feature type="strand" evidence="30">
    <location>
        <begin position="237"/>
        <end position="242"/>
    </location>
</feature>
<feature type="strand" evidence="30">
    <location>
        <begin position="246"/>
        <end position="253"/>
    </location>
</feature>
<feature type="strand" evidence="30">
    <location>
        <begin position="258"/>
        <end position="262"/>
    </location>
</feature>
<feature type="turn" evidence="30">
    <location>
        <begin position="263"/>
        <end position="265"/>
    </location>
</feature>
<feature type="strand" evidence="30">
    <location>
        <begin position="268"/>
        <end position="272"/>
    </location>
</feature>
<feature type="strand" evidence="30">
    <location>
        <begin position="279"/>
        <end position="284"/>
    </location>
</feature>
<feature type="helix" evidence="30">
    <location>
        <begin position="287"/>
        <end position="289"/>
    </location>
</feature>
<feature type="helix" evidence="30">
    <location>
        <begin position="290"/>
        <end position="297"/>
    </location>
</feature>
<feature type="strand" evidence="30">
    <location>
        <begin position="310"/>
        <end position="315"/>
    </location>
</feature>
<feature type="strand" evidence="30">
    <location>
        <begin position="320"/>
        <end position="324"/>
    </location>
</feature>
<feature type="turn" evidence="30">
    <location>
        <begin position="325"/>
        <end position="327"/>
    </location>
</feature>
<feature type="strand" evidence="30">
    <location>
        <begin position="330"/>
        <end position="334"/>
    </location>
</feature>
<feature type="strand" evidence="30">
    <location>
        <begin position="341"/>
        <end position="346"/>
    </location>
</feature>
<feature type="strand" evidence="30">
    <location>
        <begin position="353"/>
        <end position="357"/>
    </location>
</feature>
<feature type="strand" evidence="30">
    <location>
        <begin position="360"/>
        <end position="366"/>
    </location>
</feature>
<feature type="helix" evidence="30">
    <location>
        <begin position="367"/>
        <end position="369"/>
    </location>
</feature>
<feature type="strand" evidence="30">
    <location>
        <begin position="371"/>
        <end position="377"/>
    </location>
</feature>
<feature type="strand" evidence="30">
    <location>
        <begin position="383"/>
        <end position="388"/>
    </location>
</feature>
<feature type="strand" evidence="30">
    <location>
        <begin position="390"/>
        <end position="399"/>
    </location>
</feature>
<feature type="strand" evidence="30">
    <location>
        <begin position="404"/>
        <end position="410"/>
    </location>
</feature>
<protein>
    <recommendedName>
        <fullName evidence="7 26">Platelet-activating factor acetylhydrolase IB subunit beta</fullName>
    </recommendedName>
    <alternativeName>
        <fullName evidence="7">Lissencephaly-1 protein</fullName>
        <shortName evidence="7">LIS-1</shortName>
    </alternativeName>
    <alternativeName>
        <fullName evidence="7">PAF acetylhydrolase 45 kDa subunit</fullName>
        <shortName evidence="7">PAF-AH 45 kDa subunit</shortName>
    </alternativeName>
    <alternativeName>
        <fullName evidence="7">PAF-AH alpha</fullName>
        <shortName evidence="7">PAFAH alpha</shortName>
    </alternativeName>
</protein>
<reference key="1">
    <citation type="journal article" date="1993" name="Nature">
        <title>Isolation of a Miller-Dieker lissencephaly gene containing G protein beta-subunit-like repeats.</title>
        <authorList>
            <person name="Reiner O."/>
            <person name="Carrozzo R."/>
            <person name="Shen Y."/>
            <person name="Wehnert M."/>
            <person name="Faustinella F."/>
            <person name="Dobyns W.B."/>
            <person name="Caskey C.T."/>
            <person name="Ledbetter D.H."/>
        </authorList>
    </citation>
    <scope>NUCLEOTIDE SEQUENCE [MRNA] (ISOFORM 1)</scope>
    <source>
        <tissue>Brain</tissue>
        <tissue>Kidney</tissue>
    </source>
</reference>
<reference key="2">
    <citation type="journal article" date="1997" name="Hum. Mol. Genet.">
        <title>Point mutations and an intragenic deletion in LIS1, the lissencephaly causative gene in isolated lissencephaly sequence and Miller-Dieker syndrome.</title>
        <authorList>
            <person name="Lo Nigro C."/>
            <person name="Chong S.S."/>
            <person name="Smith A.C.M."/>
            <person name="Dobyns W.B."/>
            <person name="Carrozzo R."/>
            <person name="Ledbetter D.H."/>
        </authorList>
    </citation>
    <scope>NUCLEOTIDE SEQUENCE [GENOMIC DNA]</scope>
    <scope>VARIANT LIS1 ARG-149</scope>
</reference>
<reference key="3">
    <citation type="submission" date="1999-11" db="EMBL/GenBank/DDBJ databases">
        <title>High expression of the lissencephaly gene in hepatocarcinoma patients.</title>
        <authorList>
            <person name="Zhao M.J."/>
            <person name="Xia S.L."/>
            <person name="Li T.P."/>
        </authorList>
    </citation>
    <scope>NUCLEOTIDE SEQUENCE [MRNA] (ISOFORM 1)</scope>
    <source>
        <tissue>Liver</tissue>
    </source>
</reference>
<reference key="4">
    <citation type="submission" date="2001-07" db="EMBL/GenBank/DDBJ databases">
        <authorList>
            <person name="Feng Z."/>
            <person name="Zhang B."/>
            <person name="Peng X."/>
            <person name="Yuan J."/>
            <person name="Qiang B."/>
        </authorList>
    </citation>
    <scope>NUCLEOTIDE SEQUENCE [MRNA] (ISOFORM 1)</scope>
</reference>
<reference key="5">
    <citation type="journal article" date="2004" name="Nat. Genet.">
        <title>Complete sequencing and characterization of 21,243 full-length human cDNAs.</title>
        <authorList>
            <person name="Ota T."/>
            <person name="Suzuki Y."/>
            <person name="Nishikawa T."/>
            <person name="Otsuki T."/>
            <person name="Sugiyama T."/>
            <person name="Irie R."/>
            <person name="Wakamatsu A."/>
            <person name="Hayashi K."/>
            <person name="Sato H."/>
            <person name="Nagai K."/>
            <person name="Kimura K."/>
            <person name="Makita H."/>
            <person name="Sekine M."/>
            <person name="Obayashi M."/>
            <person name="Nishi T."/>
            <person name="Shibahara T."/>
            <person name="Tanaka T."/>
            <person name="Ishii S."/>
            <person name="Yamamoto J."/>
            <person name="Saito K."/>
            <person name="Kawai Y."/>
            <person name="Isono Y."/>
            <person name="Nakamura Y."/>
            <person name="Nagahari K."/>
            <person name="Murakami K."/>
            <person name="Yasuda T."/>
            <person name="Iwayanagi T."/>
            <person name="Wagatsuma M."/>
            <person name="Shiratori A."/>
            <person name="Sudo H."/>
            <person name="Hosoiri T."/>
            <person name="Kaku Y."/>
            <person name="Kodaira H."/>
            <person name="Kondo H."/>
            <person name="Sugawara M."/>
            <person name="Takahashi M."/>
            <person name="Kanda K."/>
            <person name="Yokoi T."/>
            <person name="Furuya T."/>
            <person name="Kikkawa E."/>
            <person name="Omura Y."/>
            <person name="Abe K."/>
            <person name="Kamihara K."/>
            <person name="Katsuta N."/>
            <person name="Sato K."/>
            <person name="Tanikawa M."/>
            <person name="Yamazaki M."/>
            <person name="Ninomiya K."/>
            <person name="Ishibashi T."/>
            <person name="Yamashita H."/>
            <person name="Murakawa K."/>
            <person name="Fujimori K."/>
            <person name="Tanai H."/>
            <person name="Kimata M."/>
            <person name="Watanabe M."/>
            <person name="Hiraoka S."/>
            <person name="Chiba Y."/>
            <person name="Ishida S."/>
            <person name="Ono Y."/>
            <person name="Takiguchi S."/>
            <person name="Watanabe S."/>
            <person name="Yosida M."/>
            <person name="Hotuta T."/>
            <person name="Kusano J."/>
            <person name="Kanehori K."/>
            <person name="Takahashi-Fujii A."/>
            <person name="Hara H."/>
            <person name="Tanase T.-O."/>
            <person name="Nomura Y."/>
            <person name="Togiya S."/>
            <person name="Komai F."/>
            <person name="Hara R."/>
            <person name="Takeuchi K."/>
            <person name="Arita M."/>
            <person name="Imose N."/>
            <person name="Musashino K."/>
            <person name="Yuuki H."/>
            <person name="Oshima A."/>
            <person name="Sasaki N."/>
            <person name="Aotsuka S."/>
            <person name="Yoshikawa Y."/>
            <person name="Matsunawa H."/>
            <person name="Ichihara T."/>
            <person name="Shiohata N."/>
            <person name="Sano S."/>
            <person name="Moriya S."/>
            <person name="Momiyama H."/>
            <person name="Satoh N."/>
            <person name="Takami S."/>
            <person name="Terashima Y."/>
            <person name="Suzuki O."/>
            <person name="Nakagawa S."/>
            <person name="Senoh A."/>
            <person name="Mizoguchi H."/>
            <person name="Goto Y."/>
            <person name="Shimizu F."/>
            <person name="Wakebe H."/>
            <person name="Hishigaki H."/>
            <person name="Watanabe T."/>
            <person name="Sugiyama A."/>
            <person name="Takemoto M."/>
            <person name="Kawakami B."/>
            <person name="Yamazaki M."/>
            <person name="Watanabe K."/>
            <person name="Kumagai A."/>
            <person name="Itakura S."/>
            <person name="Fukuzumi Y."/>
            <person name="Fujimori Y."/>
            <person name="Komiyama M."/>
            <person name="Tashiro H."/>
            <person name="Tanigami A."/>
            <person name="Fujiwara T."/>
            <person name="Ono T."/>
            <person name="Yamada K."/>
            <person name="Fujii Y."/>
            <person name="Ozaki K."/>
            <person name="Hirao M."/>
            <person name="Ohmori Y."/>
            <person name="Kawabata A."/>
            <person name="Hikiji T."/>
            <person name="Kobatake N."/>
            <person name="Inagaki H."/>
            <person name="Ikema Y."/>
            <person name="Okamoto S."/>
            <person name="Okitani R."/>
            <person name="Kawakami T."/>
            <person name="Noguchi S."/>
            <person name="Itoh T."/>
            <person name="Shigeta K."/>
            <person name="Senba T."/>
            <person name="Matsumura K."/>
            <person name="Nakajima Y."/>
            <person name="Mizuno T."/>
            <person name="Morinaga M."/>
            <person name="Sasaki M."/>
            <person name="Togashi T."/>
            <person name="Oyama M."/>
            <person name="Hata H."/>
            <person name="Watanabe M."/>
            <person name="Komatsu T."/>
            <person name="Mizushima-Sugano J."/>
            <person name="Satoh T."/>
            <person name="Shirai Y."/>
            <person name="Takahashi Y."/>
            <person name="Nakagawa K."/>
            <person name="Okumura K."/>
            <person name="Nagase T."/>
            <person name="Nomura N."/>
            <person name="Kikuchi H."/>
            <person name="Masuho Y."/>
            <person name="Yamashita R."/>
            <person name="Nakai K."/>
            <person name="Yada T."/>
            <person name="Nakamura Y."/>
            <person name="Ohara O."/>
            <person name="Isogai T."/>
            <person name="Sugano S."/>
        </authorList>
    </citation>
    <scope>NUCLEOTIDE SEQUENCE [LARGE SCALE MRNA] (ISOFORM 1)</scope>
    <source>
        <tissue>Hippocampus</tissue>
    </source>
</reference>
<reference key="6">
    <citation type="journal article" date="2007" name="BMC Genomics">
        <title>The full-ORF clone resource of the German cDNA consortium.</title>
        <authorList>
            <person name="Bechtel S."/>
            <person name="Rosenfelder H."/>
            <person name="Duda A."/>
            <person name="Schmidt C.P."/>
            <person name="Ernst U."/>
            <person name="Wellenreuther R."/>
            <person name="Mehrle A."/>
            <person name="Schuster C."/>
            <person name="Bahr A."/>
            <person name="Bloecker H."/>
            <person name="Heubner D."/>
            <person name="Hoerlein A."/>
            <person name="Michel G."/>
            <person name="Wedler H."/>
            <person name="Koehrer K."/>
            <person name="Ottenwaelder B."/>
            <person name="Poustka A."/>
            <person name="Wiemann S."/>
            <person name="Schupp I."/>
        </authorList>
    </citation>
    <scope>NUCLEOTIDE SEQUENCE [LARGE SCALE MRNA] (ISOFORM 2)</scope>
    <source>
        <tissue>Colon</tissue>
    </source>
</reference>
<reference key="7">
    <citation type="submission" date="2005-09" db="EMBL/GenBank/DDBJ databases">
        <authorList>
            <person name="Mural R.J."/>
            <person name="Istrail S."/>
            <person name="Sutton G.G."/>
            <person name="Florea L."/>
            <person name="Halpern A.L."/>
            <person name="Mobarry C.M."/>
            <person name="Lippert R."/>
            <person name="Walenz B."/>
            <person name="Shatkay H."/>
            <person name="Dew I."/>
            <person name="Miller J.R."/>
            <person name="Flanigan M.J."/>
            <person name="Edwards N.J."/>
            <person name="Bolanos R."/>
            <person name="Fasulo D."/>
            <person name="Halldorsson B.V."/>
            <person name="Hannenhalli S."/>
            <person name="Turner R."/>
            <person name="Yooseph S."/>
            <person name="Lu F."/>
            <person name="Nusskern D.R."/>
            <person name="Shue B.C."/>
            <person name="Zheng X.H."/>
            <person name="Zhong F."/>
            <person name="Delcher A.L."/>
            <person name="Huson D.H."/>
            <person name="Kravitz S.A."/>
            <person name="Mouchard L."/>
            <person name="Reinert K."/>
            <person name="Remington K.A."/>
            <person name="Clark A.G."/>
            <person name="Waterman M.S."/>
            <person name="Eichler E.E."/>
            <person name="Adams M.D."/>
            <person name="Hunkapiller M.W."/>
            <person name="Myers E.W."/>
            <person name="Venter J.C."/>
        </authorList>
    </citation>
    <scope>NUCLEOTIDE SEQUENCE [LARGE SCALE GENOMIC DNA]</scope>
</reference>
<reference key="8">
    <citation type="journal article" date="2004" name="Genome Res.">
        <title>The status, quality, and expansion of the NIH full-length cDNA project: the Mammalian Gene Collection (MGC).</title>
        <authorList>
            <consortium name="The MGC Project Team"/>
        </authorList>
    </citation>
    <scope>NUCLEOTIDE SEQUENCE [LARGE SCALE MRNA] (ISOFORM 1)</scope>
    <source>
        <tissue>Uterus</tissue>
    </source>
</reference>
<reference key="9">
    <citation type="journal article" date="2000" name="Hum. Mol. Genet.">
        <title>Interaction between LIS1 and doublecortin, two lissencephaly gene products.</title>
        <authorList>
            <person name="Caspi M."/>
            <person name="Atlas R."/>
            <person name="Kantor A."/>
            <person name="Sapir T."/>
            <person name="Reiner O."/>
        </authorList>
    </citation>
    <scope>INTERACTION WITH DCX</scope>
</reference>
<reference key="10">
    <citation type="journal article" date="2000" name="Neuron">
        <title>LIS1 regulates CNS lamination by interacting with mNudE, a central component of the centrosome.</title>
        <authorList>
            <person name="Feng Y."/>
            <person name="Olson E.C."/>
            <person name="Stukenberg P.T."/>
            <person name="Flanagan L.A."/>
            <person name="Kirschner M.W."/>
            <person name="Walsh C.A."/>
        </authorList>
    </citation>
    <scope>INTERACTION WITH NDE1</scope>
    <scope>CHARACTERIZATION OF VARIANTS LIS1 ARG-149 AND SBH PRO-169</scope>
</reference>
<reference key="11">
    <citation type="journal article" date="2002" name="J. Cell Biol.">
        <title>Role of dynein, dynactin, and CLIP-170 interactions in LIS1 kinetochore function.</title>
        <authorList>
            <person name="Tai C.-Y."/>
            <person name="Dujardin D.L."/>
            <person name="Faulkner N.E."/>
            <person name="Vallee R.B."/>
        </authorList>
    </citation>
    <scope>SELF-ASSOCIATION</scope>
    <scope>INTERACTION WITH RSN; DYNEIN AND DYNACTIN</scope>
    <scope>SUBCELLULAR LOCATION</scope>
</reference>
<reference key="12">
    <citation type="journal article" date="2002" name="Mol. Cell. Biol.">
        <title>LIS1, CLIP-170's key to the dynein/dynactin pathway.</title>
        <authorList>
            <person name="Coquelle F.M."/>
            <person name="Caspi M."/>
            <person name="Cordelieres F.P."/>
            <person name="Dompierre J.P."/>
            <person name="Dujardin D.L."/>
            <person name="Koifman C."/>
            <person name="Martin P."/>
            <person name="Hoogenraad C.C."/>
            <person name="Akhmanova A."/>
            <person name="Galjart N."/>
            <person name="De Mey J.R."/>
            <person name="Reiner O."/>
        </authorList>
    </citation>
    <scope>SUBCELLULAR LOCATION</scope>
</reference>
<reference key="13">
    <citation type="journal article" date="2003" name="Mol. Cell. Biol.">
        <title>Human Nudel and NudE as regulators of cytoplasmic dynein in poleward protein transport along the mitotic spindle.</title>
        <authorList>
            <person name="Yan X."/>
            <person name="Li F."/>
            <person name="Liang Y."/>
            <person name="Shen Y."/>
            <person name="Zhao X."/>
            <person name="Huang Q."/>
            <person name="Zhu X."/>
        </authorList>
    </citation>
    <scope>INTERACTION WITH NDEL1</scope>
</reference>
<reference key="14">
    <citation type="journal article" date="2003" name="Nature">
        <title>Proteomic characterization of the human centrosome by protein correlation profiling.</title>
        <authorList>
            <person name="Andersen J.S."/>
            <person name="Wilkinson C.J."/>
            <person name="Mayor T."/>
            <person name="Mortensen P."/>
            <person name="Nigg E.A."/>
            <person name="Mann M."/>
        </authorList>
    </citation>
    <scope>IDENTIFICATION BY MASS SPECTROMETRY</scope>
    <scope>SUBCELLULAR LOCATION [LARGE SCALE ANALYSIS]</scope>
    <source>
        <tissue>Lymphoblast</tissue>
    </source>
</reference>
<reference key="15">
    <citation type="journal article" date="2004" name="J. Cell Biol.">
        <title>Nudel functions in membrane traffic mainly through association with Lis1 and cytoplasmic dynein.</title>
        <authorList>
            <person name="Liang Y."/>
            <person name="Yu W."/>
            <person name="Li Y."/>
            <person name="Yang Z."/>
            <person name="Yan X."/>
            <person name="Huang Q."/>
            <person name="Zhu X."/>
        </authorList>
    </citation>
    <scope>INTERACTION WITH NDEL1</scope>
</reference>
<reference key="16">
    <citation type="journal article" date="2004" name="J. Cell Biol.">
        <title>Lis1 and doublecortin function with dynein to mediate coupling of the nucleus to the centrosome in neuronal migration.</title>
        <authorList>
            <person name="Tanaka T."/>
            <person name="Serneo F.F."/>
            <person name="Higgins C."/>
            <person name="Gambello M.J."/>
            <person name="Wynshaw-Boris A."/>
            <person name="Gleeson J.G."/>
        </authorList>
    </citation>
    <scope>FUNCTION</scope>
    <scope>SUBCELLULAR LOCATION</scope>
    <scope>CHARACTERIZATION OF VARIANTS LIS1 ARG-149; SBH PRO-169 AND LIS1 HIS-317</scope>
</reference>
<reference key="17">
    <citation type="journal article" date="2004" name="Mol. Cell. Neurosci.">
        <title>Disrupted in Schizophrenia 1 and Nudel form a neurodevelopmentally regulated protein complex: implications for schizophrenia and other major neurological disorders.</title>
        <authorList>
            <person name="Brandon N.J."/>
            <person name="Handford E.J."/>
            <person name="Schurov I."/>
            <person name="Rain J.-C."/>
            <person name="Pelling M."/>
            <person name="Duran-Jimeniz B."/>
            <person name="Camargo L.M."/>
            <person name="Oliver K.R."/>
            <person name="Beher D."/>
            <person name="Shearman M.S."/>
            <person name="Whiting P.J."/>
        </authorList>
    </citation>
    <scope>INTERACTION WITH DISC1</scope>
</reference>
<reference key="18">
    <citation type="journal article" date="2009" name="Science">
        <title>Lysine acetylation targets protein complexes and co-regulates major cellular functions.</title>
        <authorList>
            <person name="Choudhary C."/>
            <person name="Kumar C."/>
            <person name="Gnad F."/>
            <person name="Nielsen M.L."/>
            <person name="Rehman M."/>
            <person name="Walther T.C."/>
            <person name="Olsen J.V."/>
            <person name="Mann M."/>
        </authorList>
    </citation>
    <scope>ACETYLATION [LARGE SCALE ANALYSIS] AT LYS-53</scope>
    <scope>IDENTIFICATION BY MASS SPECTROMETRY [LARGE SCALE ANALYSIS]</scope>
</reference>
<reference key="19">
    <citation type="journal article" date="2011" name="BMC Syst. Biol.">
        <title>Initial characterization of the human central proteome.</title>
        <authorList>
            <person name="Burkard T.R."/>
            <person name="Planyavsky M."/>
            <person name="Kaupe I."/>
            <person name="Breitwieser F.P."/>
            <person name="Buerckstuemmer T."/>
            <person name="Bennett K.L."/>
            <person name="Superti-Furga G."/>
            <person name="Colinge J."/>
        </authorList>
    </citation>
    <scope>IDENTIFICATION BY MASS SPECTROMETRY [LARGE SCALE ANALYSIS]</scope>
</reference>
<reference key="20">
    <citation type="journal article" date="2011" name="J. Cell Sci.">
        <title>Linking cytoplasmic dynein and transport of Rab8 vesicles to the midbody during cytokinesis by the doublecortin domain-containing 5 protein.</title>
        <authorList>
            <person name="Kaplan A."/>
            <person name="Reiner O."/>
        </authorList>
    </citation>
    <scope>INTERACTION WITH DCDC1</scope>
</reference>
<reference key="21">
    <citation type="journal article" date="2012" name="Mol. Biol. Cell">
        <title>BICD2, dynactin, and LIS1 cooperate in regulating dynein recruitment to cellular structures.</title>
        <authorList>
            <person name="Splinter D."/>
            <person name="Razafsky D.S."/>
            <person name="Schlager M.A."/>
            <person name="Serra-Marques A."/>
            <person name="Grigoriev I."/>
            <person name="Demmers J."/>
            <person name="Keijzer N."/>
            <person name="Jiang K."/>
            <person name="Poser I."/>
            <person name="Hyman A.A."/>
            <person name="Hoogenraad C.C."/>
            <person name="King S.J."/>
            <person name="Akhmanova A."/>
        </authorList>
    </citation>
    <scope>FUNCTION</scope>
</reference>
<reference key="22">
    <citation type="journal article" date="2012" name="Mol. Biol. Cell">
        <title>Human Asunder promotes dynein recruitment and centrosomal tethering to the nucleus at mitotic entry.</title>
        <authorList>
            <person name="Jodoin J.N."/>
            <person name="Shboul M."/>
            <person name="Sitaram P."/>
            <person name="Zein-Sabatto H."/>
            <person name="Reversade B."/>
            <person name="Lee E."/>
            <person name="Lee L.A."/>
        </authorList>
    </citation>
    <scope>INTERACTION WITH INTS13</scope>
</reference>
<reference key="23">
    <citation type="journal article" date="2013" name="J. Proteome Res.">
        <title>Toward a comprehensive characterization of a human cancer cell phosphoproteome.</title>
        <authorList>
            <person name="Zhou H."/>
            <person name="Di Palma S."/>
            <person name="Preisinger C."/>
            <person name="Peng M."/>
            <person name="Polat A.N."/>
            <person name="Heck A.J."/>
            <person name="Mohammed S."/>
        </authorList>
    </citation>
    <scope>PHOSPHORYLATION [LARGE SCALE ANALYSIS] AT SER-109</scope>
    <scope>IDENTIFICATION BY MASS SPECTROMETRY [LARGE SCALE ANALYSIS]</scope>
    <source>
        <tissue>Cervix carcinoma</tissue>
        <tissue>Erythroleukemia</tissue>
    </source>
</reference>
<reference key="24">
    <citation type="journal article" date="1999" name="Hum. Mol. Genet.">
        <title>Subcortical band heterotopia in rare affected males can be caused by missense mutations in DCX (XLIS) or LIS1.</title>
        <authorList>
            <person name="Pilz D.T."/>
            <person name="Kuc J."/>
            <person name="Matsumoto N."/>
            <person name="Bodurtha J."/>
            <person name="Bernadi B."/>
            <person name="Tassinari C.A."/>
            <person name="Dobyns W.B."/>
            <person name="Ledbetter D.H."/>
        </authorList>
    </citation>
    <scope>VARIANT SBH PRO-169</scope>
</reference>
<reference key="25">
    <citation type="journal article" date="2001" name="Neurology">
        <title>LIS1 missense mutations cause milder lissencephaly phenotypes including a child with normal IQ.</title>
        <authorList>
            <person name="Leventer R.J."/>
            <person name="Cardoso C."/>
            <person name="Ledbetter D.H."/>
            <person name="Dobyns W.B."/>
        </authorList>
    </citation>
    <scope>VARIANTS LIS1 SER-31; SER-162 AND HIS-317</scope>
</reference>
<reference key="26">
    <citation type="journal article" date="2003" name="Neurology">
        <title>Mosaic mutations of the LIS1 gene cause subcortical band heterotopia.</title>
        <authorList>
            <person name="Sicca F."/>
            <person name="Kelemen A."/>
            <person name="Genton P."/>
            <person name="Das S."/>
            <person name="Mei D."/>
            <person name="Moro F."/>
            <person name="Dobyns W.B."/>
            <person name="Guerrini R."/>
        </authorList>
    </citation>
    <scope>VARIANT SBH PRO-241</scope>
</reference>
<reference key="27">
    <citation type="journal article" date="2004" name="Neurology">
        <title>Mutation screening in a cohort of patients with lissencephaly and subcortical band heterotopia.</title>
        <authorList>
            <person name="Torres F.R."/>
            <person name="Montenegro M.A."/>
            <person name="Marques-de-Faria A.P."/>
            <person name="Guerreiro M.M."/>
            <person name="Cendes F."/>
            <person name="Lopes-Cendes I."/>
        </authorList>
    </citation>
    <scope>VARIANT LIS1 PRO-277</scope>
</reference>
<proteinExistence type="evidence at protein level"/>
<keyword id="KW-0002">3D-structure</keyword>
<keyword id="KW-0007">Acetylation</keyword>
<keyword id="KW-0025">Alternative splicing</keyword>
<keyword id="KW-0131">Cell cycle</keyword>
<keyword id="KW-0132">Cell division</keyword>
<keyword id="KW-0175">Coiled coil</keyword>
<keyword id="KW-0963">Cytoplasm</keyword>
<keyword id="KW-0206">Cytoskeleton</keyword>
<keyword id="KW-0217">Developmental protein</keyword>
<keyword id="KW-0221">Differentiation</keyword>
<keyword id="KW-0225">Disease variant</keyword>
<keyword id="KW-0442">Lipid degradation</keyword>
<keyword id="KW-0443">Lipid metabolism</keyword>
<keyword id="KW-0451">Lissencephaly</keyword>
<keyword id="KW-0472">Membrane</keyword>
<keyword id="KW-0493">Microtubule</keyword>
<keyword id="KW-0498">Mitosis</keyword>
<keyword id="KW-0524">Neurogenesis</keyword>
<keyword id="KW-0539">Nucleus</keyword>
<keyword id="KW-0597">Phosphoprotein</keyword>
<keyword id="KW-1267">Proteomics identification</keyword>
<keyword id="KW-1185">Reference proteome</keyword>
<keyword id="KW-0677">Repeat</keyword>
<keyword id="KW-0813">Transport</keyword>
<keyword id="KW-0853">WD repeat</keyword>